<comment type="catalytic activity">
    <reaction evidence="1">
        <text>beta-nicotinamide D-ribonucleotide + ATP + H(+) = diphosphate + NAD(+)</text>
        <dbReference type="Rhea" id="RHEA:21360"/>
        <dbReference type="ChEBI" id="CHEBI:14649"/>
        <dbReference type="ChEBI" id="CHEBI:15378"/>
        <dbReference type="ChEBI" id="CHEBI:30616"/>
        <dbReference type="ChEBI" id="CHEBI:33019"/>
        <dbReference type="ChEBI" id="CHEBI:57540"/>
        <dbReference type="EC" id="2.7.7.1"/>
    </reaction>
</comment>
<comment type="pathway">
    <text evidence="1">Cofactor biosynthesis; NAD(+) biosynthesis; NAD(+) from nicotinamide D-ribonucleotide: step 1/1.</text>
</comment>
<comment type="subcellular location">
    <subcellularLocation>
        <location evidence="1">Cytoplasm</location>
    </subcellularLocation>
</comment>
<comment type="similarity">
    <text evidence="1">Belongs to the archaeal NMN adenylyltransferase family.</text>
</comment>
<proteinExistence type="inferred from homology"/>
<evidence type="ECO:0000255" key="1">
    <source>
        <dbReference type="HAMAP-Rule" id="MF_00243"/>
    </source>
</evidence>
<organism>
    <name type="scientific">Pyrococcus furiosus (strain ATCC 43587 / DSM 3638 / JCM 8422 / Vc1)</name>
    <dbReference type="NCBI Taxonomy" id="186497"/>
    <lineage>
        <taxon>Archaea</taxon>
        <taxon>Methanobacteriati</taxon>
        <taxon>Methanobacteriota</taxon>
        <taxon>Thermococci</taxon>
        <taxon>Thermococcales</taxon>
        <taxon>Thermococcaceae</taxon>
        <taxon>Pyrococcus</taxon>
    </lineage>
</organism>
<accession>Q8U3K8</accession>
<sequence>MKRGLFVGRFQPVHKGHIKALEFVFDQVDEVIIGIGSAQASHTLKNPFTTGERMEMLIRALDESGLSKKKRYYLIPLPDINFNAIWVPYVESMVPKFEVVFTGNSLVAQLFRERGYKVVVQPMFKKDILSATEIRRRMIEGEPWEDLVPKSVAEYIKEIRGVERIRMLATNLESSEKELQAPIRIPEY</sequence>
<dbReference type="EC" id="2.7.7.1" evidence="1"/>
<dbReference type="EMBL" id="AE009950">
    <property type="protein sequence ID" value="AAL80582.1"/>
    <property type="molecule type" value="Genomic_DNA"/>
</dbReference>
<dbReference type="RefSeq" id="WP_011011575.1">
    <property type="nucleotide sequence ID" value="NZ_CP023154.1"/>
</dbReference>
<dbReference type="SMR" id="Q8U3K8"/>
<dbReference type="STRING" id="186497.PF0458"/>
<dbReference type="PaxDb" id="186497-PF0458"/>
<dbReference type="KEGG" id="pfu:PF0458"/>
<dbReference type="PATRIC" id="fig|186497.12.peg.482"/>
<dbReference type="eggNOG" id="arCOG00972">
    <property type="taxonomic scope" value="Archaea"/>
</dbReference>
<dbReference type="HOGENOM" id="CLU_108783_0_0_2"/>
<dbReference type="OrthoDB" id="264480at2157"/>
<dbReference type="PhylomeDB" id="Q8U3K8"/>
<dbReference type="UniPathway" id="UPA00253">
    <property type="reaction ID" value="UER00600"/>
</dbReference>
<dbReference type="Proteomes" id="UP000001013">
    <property type="component" value="Chromosome"/>
</dbReference>
<dbReference type="GO" id="GO:0005737">
    <property type="term" value="C:cytoplasm"/>
    <property type="evidence" value="ECO:0007669"/>
    <property type="project" value="UniProtKB-SubCell"/>
</dbReference>
<dbReference type="GO" id="GO:0005524">
    <property type="term" value="F:ATP binding"/>
    <property type="evidence" value="ECO:0007669"/>
    <property type="project" value="UniProtKB-KW"/>
</dbReference>
<dbReference type="GO" id="GO:0000309">
    <property type="term" value="F:nicotinamide-nucleotide adenylyltransferase activity"/>
    <property type="evidence" value="ECO:0007669"/>
    <property type="project" value="UniProtKB-UniRule"/>
</dbReference>
<dbReference type="GO" id="GO:0009435">
    <property type="term" value="P:NAD biosynthetic process"/>
    <property type="evidence" value="ECO:0007669"/>
    <property type="project" value="UniProtKB-UniRule"/>
</dbReference>
<dbReference type="CDD" id="cd02166">
    <property type="entry name" value="NMNAT_Archaea"/>
    <property type="match status" value="1"/>
</dbReference>
<dbReference type="Gene3D" id="3.40.50.620">
    <property type="entry name" value="HUPs"/>
    <property type="match status" value="1"/>
</dbReference>
<dbReference type="HAMAP" id="MF_00243">
    <property type="entry name" value="NMN_adenylyltr"/>
    <property type="match status" value="1"/>
</dbReference>
<dbReference type="InterPro" id="IPR004821">
    <property type="entry name" value="Cyt_trans-like"/>
</dbReference>
<dbReference type="InterPro" id="IPR006418">
    <property type="entry name" value="NMN_Atrans_arc"/>
</dbReference>
<dbReference type="InterPro" id="IPR014729">
    <property type="entry name" value="Rossmann-like_a/b/a_fold"/>
</dbReference>
<dbReference type="NCBIfam" id="TIGR01527">
    <property type="entry name" value="arch_NMN_Atrans"/>
    <property type="match status" value="1"/>
</dbReference>
<dbReference type="NCBIfam" id="TIGR00125">
    <property type="entry name" value="cyt_tran_rel"/>
    <property type="match status" value="1"/>
</dbReference>
<dbReference type="NCBIfam" id="NF002243">
    <property type="entry name" value="PRK01153.1"/>
    <property type="match status" value="1"/>
</dbReference>
<dbReference type="PANTHER" id="PTHR21342:SF0">
    <property type="entry name" value="BIFUNCTIONAL NMN ADENYLYLTRANSFERASE_NUDIX HYDROLASE"/>
    <property type="match status" value="1"/>
</dbReference>
<dbReference type="PANTHER" id="PTHR21342">
    <property type="entry name" value="PHOSPHOPANTETHEINE ADENYLYLTRANSFERASE"/>
    <property type="match status" value="1"/>
</dbReference>
<dbReference type="Pfam" id="PF01467">
    <property type="entry name" value="CTP_transf_like"/>
    <property type="match status" value="1"/>
</dbReference>
<dbReference type="SUPFAM" id="SSF52374">
    <property type="entry name" value="Nucleotidylyl transferase"/>
    <property type="match status" value="1"/>
</dbReference>
<reference key="1">
    <citation type="journal article" date="1999" name="Genetics">
        <title>Divergence of the hyperthermophilic archaea Pyrococcus furiosus and P. horikoshii inferred from complete genomic sequences.</title>
        <authorList>
            <person name="Maeder D.L."/>
            <person name="Weiss R.B."/>
            <person name="Dunn D.M."/>
            <person name="Cherry J.L."/>
            <person name="Gonzalez J.M."/>
            <person name="DiRuggiero J."/>
            <person name="Robb F.T."/>
        </authorList>
    </citation>
    <scope>NUCLEOTIDE SEQUENCE [LARGE SCALE GENOMIC DNA]</scope>
    <source>
        <strain>ATCC 43587 / DSM 3638 / JCM 8422 / Vc1</strain>
    </source>
</reference>
<gene>
    <name type="ordered locus">PF0458</name>
</gene>
<keyword id="KW-0067">ATP-binding</keyword>
<keyword id="KW-0963">Cytoplasm</keyword>
<keyword id="KW-0520">NAD</keyword>
<keyword id="KW-0547">Nucleotide-binding</keyword>
<keyword id="KW-0548">Nucleotidyltransferase</keyword>
<keyword id="KW-0662">Pyridine nucleotide biosynthesis</keyword>
<keyword id="KW-1185">Reference proteome</keyword>
<keyword id="KW-0808">Transferase</keyword>
<name>NADM_PYRFU</name>
<protein>
    <recommendedName>
        <fullName evidence="1">Nicotinamide-nucleotide adenylyltransferase</fullName>
        <ecNumber evidence="1">2.7.7.1</ecNumber>
    </recommendedName>
    <alternativeName>
        <fullName evidence="1">NAD(+) diphosphorylase</fullName>
    </alternativeName>
    <alternativeName>
        <fullName evidence="1">NAD(+) pyrophosphorylase</fullName>
    </alternativeName>
    <alternativeName>
        <fullName evidence="1">NMN adenylyltransferase</fullName>
    </alternativeName>
</protein>
<feature type="chain" id="PRO_0000135000" description="Nicotinamide-nucleotide adenylyltransferase">
    <location>
        <begin position="1"/>
        <end position="188"/>
    </location>
</feature>